<dbReference type="EMBL" id="LT708304">
    <property type="protein sequence ID" value="SIT98739.1"/>
    <property type="molecule type" value="Genomic_DNA"/>
</dbReference>
<dbReference type="RefSeq" id="NP_853907.1">
    <property type="nucleotide sequence ID" value="NC_002945.3"/>
</dbReference>
<dbReference type="RefSeq" id="WP_003401289.1">
    <property type="nucleotide sequence ID" value="NC_002945.4"/>
</dbReference>
<dbReference type="SMR" id="P0A5C6"/>
<dbReference type="PATRIC" id="fig|233413.5.peg.269"/>
<dbReference type="Proteomes" id="UP000001419">
    <property type="component" value="Chromosome"/>
</dbReference>
<dbReference type="InterPro" id="IPR022566">
    <property type="entry name" value="DUF2613"/>
</dbReference>
<dbReference type="Pfam" id="PF11021">
    <property type="entry name" value="DUF2613"/>
    <property type="match status" value="1"/>
</dbReference>
<keyword id="KW-1185">Reference proteome</keyword>
<keyword id="KW-0732">Signal</keyword>
<organism>
    <name type="scientific">Mycobacterium bovis (strain ATCC BAA-935 / AF2122/97)</name>
    <dbReference type="NCBI Taxonomy" id="233413"/>
    <lineage>
        <taxon>Bacteria</taxon>
        <taxon>Bacillati</taxon>
        <taxon>Actinomycetota</taxon>
        <taxon>Actinomycetes</taxon>
        <taxon>Mycobacteriales</taxon>
        <taxon>Mycobacteriaceae</taxon>
        <taxon>Mycobacterium</taxon>
        <taxon>Mycobacterium tuberculosis complex</taxon>
    </lineage>
</organism>
<proteinExistence type="inferred from homology"/>
<reference key="1">
    <citation type="journal article" date="2003" name="Proc. Natl. Acad. Sci. U.S.A.">
        <title>The complete genome sequence of Mycobacterium bovis.</title>
        <authorList>
            <person name="Garnier T."/>
            <person name="Eiglmeier K."/>
            <person name="Camus J.-C."/>
            <person name="Medina N."/>
            <person name="Mansoor H."/>
            <person name="Pryor M."/>
            <person name="Duthoy S."/>
            <person name="Grondin S."/>
            <person name="Lacroix C."/>
            <person name="Monsempe C."/>
            <person name="Simon S."/>
            <person name="Harris B."/>
            <person name="Atkin R."/>
            <person name="Doggett J."/>
            <person name="Mayes R."/>
            <person name="Keating L."/>
            <person name="Wheeler P.R."/>
            <person name="Parkhill J."/>
            <person name="Barrell B.G."/>
            <person name="Cole S.T."/>
            <person name="Gordon S.V."/>
            <person name="Hewinson R.G."/>
        </authorList>
    </citation>
    <scope>NUCLEOTIDE SEQUENCE [LARGE SCALE GENOMIC DNA]</scope>
    <source>
        <strain>ATCC BAA-935 / AF2122/97</strain>
    </source>
</reference>
<reference key="2">
    <citation type="journal article" date="2017" name="Genome Announc.">
        <title>Updated reference genome sequence and annotation of Mycobacterium bovis AF2122/97.</title>
        <authorList>
            <person name="Malone K.M."/>
            <person name="Farrell D."/>
            <person name="Stuber T.P."/>
            <person name="Schubert O.T."/>
            <person name="Aebersold R."/>
            <person name="Robbe-Austerman S."/>
            <person name="Gordon S.V."/>
        </authorList>
    </citation>
    <scope>NUCLEOTIDE SEQUENCE [LARGE SCALE GENOMIC DNA]</scope>
    <scope>GENOME REANNOTATION</scope>
    <source>
        <strain>ATCC BAA-935 / AF2122/97</strain>
    </source>
</reference>
<gene>
    <name type="ordered locus">BQ2027_MB0242C</name>
</gene>
<accession>P0A5C6</accession>
<accession>A0A1R3XUQ5</accession>
<accession>P58240</accession>
<accession>X2BEG4</accession>
<protein>
    <recommendedName>
        <fullName>Putative secreted protein Mb0242c</fullName>
    </recommendedName>
</protein>
<sequence>MNRIVAPAAASVVVGLLLGAAAIFGVTLMVQQDKKPPLPGGDPSSSVLNRVEYGNRS</sequence>
<name>Y242_MYCBO</name>
<feature type="signal peptide" evidence="1">
    <location>
        <begin position="1"/>
        <end position="32"/>
    </location>
</feature>
<feature type="chain" id="PRO_0000014069" description="Putative secreted protein Mb0242c">
    <location>
        <begin position="33"/>
        <end position="57"/>
    </location>
</feature>
<feature type="region of interest" description="Disordered" evidence="2">
    <location>
        <begin position="34"/>
        <end position="57"/>
    </location>
</feature>
<evidence type="ECO:0000255" key="1"/>
<evidence type="ECO:0000256" key="2">
    <source>
        <dbReference type="SAM" id="MobiDB-lite"/>
    </source>
</evidence>